<sequence length="80" mass="9232">MSEVKVFEVRGTFRMGDEPRQPFTRQVPATSEEEALEKVYSDLGSEHGVSRMEIQIEEIREIDPSKVEDPILRRLLGVEE</sequence>
<name>RL18A_METKA</name>
<keyword id="KW-1185">Reference proteome</keyword>
<keyword id="KW-0687">Ribonucleoprotein</keyword>
<keyword id="KW-0689">Ribosomal protein</keyword>
<keyword id="KW-0694">RNA-binding</keyword>
<keyword id="KW-0699">rRNA-binding</keyword>
<accession>Q8TUY6</accession>
<organism>
    <name type="scientific">Methanopyrus kandleri (strain AV19 / DSM 6324 / JCM 9639 / NBRC 100938)</name>
    <dbReference type="NCBI Taxonomy" id="190192"/>
    <lineage>
        <taxon>Archaea</taxon>
        <taxon>Methanobacteriati</taxon>
        <taxon>Methanobacteriota</taxon>
        <taxon>Methanomada group</taxon>
        <taxon>Methanopyri</taxon>
        <taxon>Methanopyrales</taxon>
        <taxon>Methanopyraceae</taxon>
        <taxon>Methanopyrus</taxon>
    </lineage>
</organism>
<feature type="chain" id="PRO_0000153699" description="Large ribosomal subunit protein eL20">
    <location>
        <begin position="1"/>
        <end position="80"/>
    </location>
</feature>
<reference key="1">
    <citation type="journal article" date="2002" name="Proc. Natl. Acad. Sci. U.S.A.">
        <title>The complete genome of hyperthermophile Methanopyrus kandleri AV19 and monophyly of archaeal methanogens.</title>
        <authorList>
            <person name="Slesarev A.I."/>
            <person name="Mezhevaya K.V."/>
            <person name="Makarova K.S."/>
            <person name="Polushin N.N."/>
            <person name="Shcherbinina O.V."/>
            <person name="Shakhova V.V."/>
            <person name="Belova G.I."/>
            <person name="Aravind L."/>
            <person name="Natale D.A."/>
            <person name="Rogozin I.B."/>
            <person name="Tatusov R.L."/>
            <person name="Wolf Y.I."/>
            <person name="Stetter K.O."/>
            <person name="Malykh A.G."/>
            <person name="Koonin E.V."/>
            <person name="Kozyavkin S.A."/>
        </authorList>
    </citation>
    <scope>NUCLEOTIDE SEQUENCE [LARGE SCALE GENOMIC DNA]</scope>
    <source>
        <strain>AV19 / DSM 6324 / JCM 9639 / NBRC 100938</strain>
    </source>
</reference>
<comment type="subunit">
    <text evidence="1">Part of the 50S ribosomal subunit. Binds 23S rRNA.</text>
</comment>
<comment type="similarity">
    <text evidence="1">Belongs to the eukaryotic ribosomal protein eL20 family.</text>
</comment>
<gene>
    <name evidence="1" type="primary">rpl18a</name>
    <name evidence="1" type="synonym">rpl20e</name>
    <name evidence="1" type="synonym">rplX</name>
    <name type="ordered locus">MK1615</name>
</gene>
<dbReference type="EMBL" id="AE009439">
    <property type="protein sequence ID" value="AAM02828.1"/>
    <property type="molecule type" value="Genomic_DNA"/>
</dbReference>
<dbReference type="RefSeq" id="WP_011019983.1">
    <property type="nucleotide sequence ID" value="NC_003551.1"/>
</dbReference>
<dbReference type="SMR" id="Q8TUY6"/>
<dbReference type="FunCoup" id="Q8TUY6">
    <property type="interactions" value="59"/>
</dbReference>
<dbReference type="STRING" id="190192.MK1615"/>
<dbReference type="PaxDb" id="190192-MK1615"/>
<dbReference type="EnsemblBacteria" id="AAM02828">
    <property type="protein sequence ID" value="AAM02828"/>
    <property type="gene ID" value="MK1615"/>
</dbReference>
<dbReference type="GeneID" id="1478210"/>
<dbReference type="KEGG" id="mka:MK1615"/>
<dbReference type="HOGENOM" id="CLU_177460_0_0_2"/>
<dbReference type="InParanoid" id="Q8TUY6"/>
<dbReference type="OrthoDB" id="191241at2157"/>
<dbReference type="Proteomes" id="UP000001826">
    <property type="component" value="Chromosome"/>
</dbReference>
<dbReference type="GO" id="GO:1990904">
    <property type="term" value="C:ribonucleoprotein complex"/>
    <property type="evidence" value="ECO:0007669"/>
    <property type="project" value="UniProtKB-KW"/>
</dbReference>
<dbReference type="GO" id="GO:0005840">
    <property type="term" value="C:ribosome"/>
    <property type="evidence" value="ECO:0007669"/>
    <property type="project" value="UniProtKB-KW"/>
</dbReference>
<dbReference type="GO" id="GO:0070180">
    <property type="term" value="F:large ribosomal subunit rRNA binding"/>
    <property type="evidence" value="ECO:0007669"/>
    <property type="project" value="UniProtKB-UniRule"/>
</dbReference>
<dbReference type="GO" id="GO:0003735">
    <property type="term" value="F:structural constituent of ribosome"/>
    <property type="evidence" value="ECO:0007669"/>
    <property type="project" value="InterPro"/>
</dbReference>
<dbReference type="GO" id="GO:0006412">
    <property type="term" value="P:translation"/>
    <property type="evidence" value="ECO:0007669"/>
    <property type="project" value="UniProtKB-UniRule"/>
</dbReference>
<dbReference type="Gene3D" id="3.10.20.10">
    <property type="match status" value="1"/>
</dbReference>
<dbReference type="HAMAP" id="MF_00273">
    <property type="entry name" value="Ribosomal_eL20"/>
    <property type="match status" value="1"/>
</dbReference>
<dbReference type="InterPro" id="IPR028877">
    <property type="entry name" value="Ribosomal_eL20"/>
</dbReference>
<dbReference type="InterPro" id="IPR023573">
    <property type="entry name" value="Ribosomal_eL20_dom"/>
</dbReference>
<dbReference type="NCBIfam" id="NF001981">
    <property type="entry name" value="PRK00773.1-1"/>
    <property type="match status" value="1"/>
</dbReference>
<dbReference type="Pfam" id="PF01775">
    <property type="entry name" value="Ribosomal_L18A"/>
    <property type="match status" value="1"/>
</dbReference>
<dbReference type="SUPFAM" id="SSF160374">
    <property type="entry name" value="RplX-like"/>
    <property type="match status" value="1"/>
</dbReference>
<evidence type="ECO:0000255" key="1">
    <source>
        <dbReference type="HAMAP-Rule" id="MF_00273"/>
    </source>
</evidence>
<evidence type="ECO:0000305" key="2"/>
<protein>
    <recommendedName>
        <fullName evidence="1">Large ribosomal subunit protein eL20</fullName>
    </recommendedName>
    <alternativeName>
        <fullName evidence="2">50S ribosomal protein L18Ae</fullName>
    </alternativeName>
    <alternativeName>
        <fullName evidence="1">50S ribosomal protein L20e</fullName>
    </alternativeName>
    <alternativeName>
        <fullName evidence="1">50S ribosomal protein LX</fullName>
    </alternativeName>
</protein>
<proteinExistence type="inferred from homology"/>